<protein>
    <recommendedName>
        <fullName>Phosphoheptose isomerase</fullName>
        <ecNumber>5.3.1.28</ecNumber>
    </recommendedName>
    <alternativeName>
        <fullName>Sedoheptulose 7-phosphate isomerase</fullName>
    </alternativeName>
</protein>
<gene>
    <name type="primary">gmhA</name>
    <name type="synonym">lpcA</name>
    <name type="synonym">tfrA</name>
    <name type="synonym">yafI</name>
    <name type="ordered locus">b0222</name>
    <name type="ordered locus">JW0212</name>
</gene>
<evidence type="ECO:0000250" key="1"/>
<evidence type="ECO:0000269" key="2">
    <source>
    </source>
</evidence>
<evidence type="ECO:0000269" key="3">
    <source>
    </source>
</evidence>
<evidence type="ECO:0000305" key="4"/>
<evidence type="ECO:0007829" key="5">
    <source>
        <dbReference type="PDB" id="2I2W"/>
    </source>
</evidence>
<dbReference type="EC" id="5.3.1.28"/>
<dbReference type="EMBL" id="U32590">
    <property type="protein sequence ID" value="AAC43630.1"/>
    <property type="molecule type" value="Genomic_DNA"/>
</dbReference>
<dbReference type="EMBL" id="D38582">
    <property type="protein sequence ID" value="BAA07584.1"/>
    <property type="molecule type" value="Genomic_DNA"/>
</dbReference>
<dbReference type="EMBL" id="U70214">
    <property type="protein sequence ID" value="AAB08644.1"/>
    <property type="status" value="ALT_INIT"/>
    <property type="molecule type" value="Genomic_DNA"/>
</dbReference>
<dbReference type="EMBL" id="U00096">
    <property type="protein sequence ID" value="AAC73326.1"/>
    <property type="molecule type" value="Genomic_DNA"/>
</dbReference>
<dbReference type="EMBL" id="AP009048">
    <property type="protein sequence ID" value="BAA77892.1"/>
    <property type="molecule type" value="Genomic_DNA"/>
</dbReference>
<dbReference type="PIR" id="G64746">
    <property type="entry name" value="G64746"/>
</dbReference>
<dbReference type="RefSeq" id="NP_414757.1">
    <property type="nucleotide sequence ID" value="NC_000913.3"/>
</dbReference>
<dbReference type="RefSeq" id="WP_000284050.1">
    <property type="nucleotide sequence ID" value="NZ_STEB01000020.1"/>
</dbReference>
<dbReference type="PDB" id="2I22">
    <property type="method" value="X-ray"/>
    <property type="resolution" value="2.80 A"/>
    <property type="chains" value="A/B/C/D=1-192"/>
</dbReference>
<dbReference type="PDB" id="2I2W">
    <property type="method" value="X-ray"/>
    <property type="resolution" value="1.95 A"/>
    <property type="chains" value="A/B/C/D=1-192"/>
</dbReference>
<dbReference type="PDBsum" id="2I22"/>
<dbReference type="PDBsum" id="2I2W"/>
<dbReference type="SMR" id="P63224"/>
<dbReference type="BioGRID" id="4263370">
    <property type="interactions" value="277"/>
</dbReference>
<dbReference type="DIP" id="DIP-48179N"/>
<dbReference type="FunCoup" id="P63224">
    <property type="interactions" value="213"/>
</dbReference>
<dbReference type="STRING" id="511145.b0222"/>
<dbReference type="jPOST" id="P63224"/>
<dbReference type="PaxDb" id="511145-b0222"/>
<dbReference type="EnsemblBacteria" id="AAC73326">
    <property type="protein sequence ID" value="AAC73326"/>
    <property type="gene ID" value="b0222"/>
</dbReference>
<dbReference type="GeneID" id="93777173"/>
<dbReference type="GeneID" id="949134"/>
<dbReference type="KEGG" id="ecj:JW0212"/>
<dbReference type="KEGG" id="eco:b0222"/>
<dbReference type="KEGG" id="ecoc:C3026_01050"/>
<dbReference type="PATRIC" id="fig|1411691.4.peg.2061"/>
<dbReference type="EchoBASE" id="EB2940"/>
<dbReference type="eggNOG" id="COG0279">
    <property type="taxonomic scope" value="Bacteria"/>
</dbReference>
<dbReference type="HOGENOM" id="CLU_080999_4_0_6"/>
<dbReference type="InParanoid" id="P63224"/>
<dbReference type="OMA" id="KDEANIH"/>
<dbReference type="OrthoDB" id="9810929at2"/>
<dbReference type="PhylomeDB" id="P63224"/>
<dbReference type="BioCyc" id="EcoCyc:G6106-MONOMER"/>
<dbReference type="BioCyc" id="MetaCyc:G6106-MONOMER"/>
<dbReference type="BRENDA" id="5.3.1.28">
    <property type="organism ID" value="2026"/>
</dbReference>
<dbReference type="SABIO-RK" id="P63224"/>
<dbReference type="UniPathway" id="UPA00041">
    <property type="reaction ID" value="UER00436"/>
</dbReference>
<dbReference type="UniPathway" id="UPA00958"/>
<dbReference type="EvolutionaryTrace" id="P63224"/>
<dbReference type="PRO" id="PR:P63224"/>
<dbReference type="Proteomes" id="UP000000625">
    <property type="component" value="Chromosome"/>
</dbReference>
<dbReference type="GO" id="GO:0005737">
    <property type="term" value="C:cytoplasm"/>
    <property type="evidence" value="ECO:0000250"/>
    <property type="project" value="EcoCyc"/>
</dbReference>
<dbReference type="GO" id="GO:0005829">
    <property type="term" value="C:cytosol"/>
    <property type="evidence" value="ECO:0000314"/>
    <property type="project" value="EcoCyc"/>
</dbReference>
<dbReference type="GO" id="GO:0032991">
    <property type="term" value="C:protein-containing complex"/>
    <property type="evidence" value="ECO:0000314"/>
    <property type="project" value="EcoCyc"/>
</dbReference>
<dbReference type="GO" id="GO:0097367">
    <property type="term" value="F:carbohydrate derivative binding"/>
    <property type="evidence" value="ECO:0007669"/>
    <property type="project" value="InterPro"/>
</dbReference>
<dbReference type="GO" id="GO:0008968">
    <property type="term" value="F:D-sedoheptulose 7-phosphate isomerase activity"/>
    <property type="evidence" value="ECO:0000314"/>
    <property type="project" value="EcoCyc"/>
</dbReference>
<dbReference type="GO" id="GO:0042802">
    <property type="term" value="F:identical protein binding"/>
    <property type="evidence" value="ECO:0000314"/>
    <property type="project" value="EcoCyc"/>
</dbReference>
<dbReference type="GO" id="GO:0008270">
    <property type="term" value="F:zinc ion binding"/>
    <property type="evidence" value="ECO:0007669"/>
    <property type="project" value="UniProtKB-UniRule"/>
</dbReference>
<dbReference type="GO" id="GO:2001061">
    <property type="term" value="P:D-glycero-D-manno-heptose 7-phosphate biosynthetic process"/>
    <property type="evidence" value="ECO:0000314"/>
    <property type="project" value="EcoCyc"/>
</dbReference>
<dbReference type="GO" id="GO:0009244">
    <property type="term" value="P:lipopolysaccharide core region biosynthetic process"/>
    <property type="evidence" value="ECO:0000315"/>
    <property type="project" value="EcoCyc"/>
</dbReference>
<dbReference type="GO" id="GO:0051289">
    <property type="term" value="P:protein homotetramerization"/>
    <property type="evidence" value="ECO:0000314"/>
    <property type="project" value="EcoCyc"/>
</dbReference>
<dbReference type="CDD" id="cd05006">
    <property type="entry name" value="SIS_GmhA"/>
    <property type="match status" value="1"/>
</dbReference>
<dbReference type="FunFam" id="3.40.50.10490:FF:000013">
    <property type="entry name" value="Phosphoheptose isomerase"/>
    <property type="match status" value="1"/>
</dbReference>
<dbReference type="Gene3D" id="3.40.50.10490">
    <property type="entry name" value="Glucose-6-phosphate isomerase like protein, domain 1"/>
    <property type="match status" value="1"/>
</dbReference>
<dbReference type="HAMAP" id="MF_00067">
    <property type="entry name" value="GmhA"/>
    <property type="match status" value="1"/>
</dbReference>
<dbReference type="InterPro" id="IPR035461">
    <property type="entry name" value="GmhA/DiaA"/>
</dbReference>
<dbReference type="InterPro" id="IPR004515">
    <property type="entry name" value="Phosphoheptose_Isoase"/>
</dbReference>
<dbReference type="InterPro" id="IPR001347">
    <property type="entry name" value="SIS_dom"/>
</dbReference>
<dbReference type="InterPro" id="IPR046348">
    <property type="entry name" value="SIS_dom_sf"/>
</dbReference>
<dbReference type="InterPro" id="IPR050099">
    <property type="entry name" value="SIS_GmhA/DiaA_subfam"/>
</dbReference>
<dbReference type="NCBIfam" id="TIGR00441">
    <property type="entry name" value="gmhA"/>
    <property type="match status" value="1"/>
</dbReference>
<dbReference type="NCBIfam" id="NF001628">
    <property type="entry name" value="PRK00414.1"/>
    <property type="match status" value="1"/>
</dbReference>
<dbReference type="PANTHER" id="PTHR30390:SF7">
    <property type="entry name" value="PHOSPHOHEPTOSE ISOMERASE"/>
    <property type="match status" value="1"/>
</dbReference>
<dbReference type="PANTHER" id="PTHR30390">
    <property type="entry name" value="SEDOHEPTULOSE 7-PHOSPHATE ISOMERASE / DNAA INITIATOR-ASSOCIATING FACTOR FOR REPLICATION INITIATION"/>
    <property type="match status" value="1"/>
</dbReference>
<dbReference type="Pfam" id="PF13580">
    <property type="entry name" value="SIS_2"/>
    <property type="match status" value="1"/>
</dbReference>
<dbReference type="SUPFAM" id="SSF53697">
    <property type="entry name" value="SIS domain"/>
    <property type="match status" value="1"/>
</dbReference>
<dbReference type="PROSITE" id="PS51464">
    <property type="entry name" value="SIS"/>
    <property type="match status" value="1"/>
</dbReference>
<comment type="function">
    <text evidence="2 3">Catalyzes the isomerization of sedoheptulose 7-phosphate in D-glycero-D-manno-heptose 7-phosphate.</text>
</comment>
<comment type="catalytic activity">
    <reaction evidence="3">
        <text>2 D-sedoheptulose 7-phosphate = D-glycero-alpha-D-manno-heptose 7-phosphate + D-glycero-beta-D-manno-heptose 7-phosphate</text>
        <dbReference type="Rhea" id="RHEA:27489"/>
        <dbReference type="ChEBI" id="CHEBI:57483"/>
        <dbReference type="ChEBI" id="CHEBI:60203"/>
        <dbReference type="ChEBI" id="CHEBI:60204"/>
        <dbReference type="EC" id="5.3.1.28"/>
    </reaction>
</comment>
<comment type="cofactor">
    <cofactor evidence="1">
        <name>Zn(2+)</name>
        <dbReference type="ChEBI" id="CHEBI:29105"/>
    </cofactor>
    <text evidence="1">Binds 1 zinc ion per subunit.</text>
</comment>
<comment type="pathway">
    <text>Carbohydrate biosynthesis; D-glycero-D-manno-heptose 7-phosphate biosynthesis; D-glycero-alpha-D-manno-heptose 7-phosphate and D-glycero-beta-D-manno-heptose 7-phosphate from sedoheptulose 7-phosphate: step 1/1.</text>
</comment>
<comment type="pathway">
    <text>Bacterial outer membrane biogenesis; LPS core biosynthesis.</text>
</comment>
<comment type="subunit">
    <text evidence="3">Homotetramer.</text>
</comment>
<comment type="subcellular location">
    <subcellularLocation>
        <location>Cytoplasm</location>
    </subcellularLocation>
</comment>
<comment type="miscellaneous">
    <text>The reaction produces a racemic mixture of D-glycero-alpha-D-manno-heptose 7-phosphate and D-glycero-beta-D-manno-heptose 7-phosphate.</text>
</comment>
<comment type="similarity">
    <text evidence="4">Belongs to the SIS family. GmhA subfamily.</text>
</comment>
<comment type="sequence caution" evidence="4">
    <conflict type="erroneous initiation">
        <sequence resource="EMBL-CDS" id="AAB08644"/>
    </conflict>
    <text>Extended N-terminus.</text>
</comment>
<accession>P63224</accession>
<accession>P51001</accession>
<proteinExistence type="evidence at protein level"/>
<sequence>MYQDLIRNELNEAAETLANFLKDDANIHAIQRAAVLLADSFKAGGKVLSCGNGGSHCDAMHFAEELTGRYRENRPGYPAIAISDVSHISCVGNDFGFNDIFSRYVEAVGREGDVLLGISTSGNSANVIKAIAAAREKGMKVITLTGKDGGKMAGTADIEIRVPHFGYADRIQEIHIKVIHILIQLIEKEMVK</sequence>
<keyword id="KW-0002">3D-structure</keyword>
<keyword id="KW-0119">Carbohydrate metabolism</keyword>
<keyword id="KW-0963">Cytoplasm</keyword>
<keyword id="KW-0413">Isomerase</keyword>
<keyword id="KW-0448">Lipopolysaccharide biosynthesis</keyword>
<keyword id="KW-0479">Metal-binding</keyword>
<keyword id="KW-1185">Reference proteome</keyword>
<keyword id="KW-0862">Zinc</keyword>
<reference key="1">
    <citation type="journal article" date="1996" name="J. Biol. Chem.">
        <title>Biosynthesis of inner core lipopolysaccharide in enteric bacteria identification and characterization of a conserved phosphoheptose isomerase.</title>
        <authorList>
            <person name="Brooke J.S."/>
            <person name="Valvano M.A."/>
        </authorList>
    </citation>
    <scope>NUCLEOTIDE SEQUENCE [GENOMIC DNA]</scope>
    <source>
        <strain>K12 / W3110 / ATCC 27325 / DSM 5911</strain>
    </source>
</reference>
<reference key="2">
    <citation type="journal article" date="1995" name="Mutat. Res.">
        <title>dinP, a new gene in Escherichia coli, whose product shows similarities to UmuC and its homologues.</title>
        <authorList>
            <person name="Ohmori H."/>
            <person name="Hatada E."/>
            <person name="Qiao Y."/>
            <person name="Tsuji M."/>
            <person name="Fukuda R."/>
        </authorList>
    </citation>
    <scope>NUCLEOTIDE SEQUENCE [GENOMIC DNA]</scope>
    <source>
        <strain>K12 / W3110 / ATCC 27325 / DSM 5911</strain>
    </source>
</reference>
<reference key="3">
    <citation type="submission" date="1996-02" db="EMBL/GenBank/DDBJ databases">
        <title>Systematic sequencing of the Escherichia coli genome: analysis of the 4.0 - 6.0 min (189,987 - 281,416bp) region.</title>
        <authorList>
            <person name="Takemoto K."/>
            <person name="Mori H."/>
            <person name="Murayama N."/>
            <person name="Kataoka K."/>
            <person name="Yano M."/>
            <person name="Itoh T."/>
            <person name="Yamamoto Y."/>
            <person name="Inokuchi H."/>
            <person name="Miki T."/>
            <person name="Hatada E."/>
            <person name="Fukuda R."/>
            <person name="Ichihara S."/>
            <person name="Mizuno T."/>
            <person name="Makino K."/>
            <person name="Nakata A."/>
            <person name="Yura T."/>
            <person name="Sampei G."/>
            <person name="Mizobuchi K."/>
        </authorList>
    </citation>
    <scope>NUCLEOTIDE SEQUENCE [LARGE SCALE GENOMIC DNA]</scope>
    <source>
        <strain>K12 / W3110 / ATCC 27325 / DSM 5911</strain>
    </source>
</reference>
<reference key="4">
    <citation type="submission" date="1997-01" db="EMBL/GenBank/DDBJ databases">
        <title>Sequence of minutes 4-25 of Escherichia coli.</title>
        <authorList>
            <person name="Chung E."/>
            <person name="Allen E."/>
            <person name="Araujo R."/>
            <person name="Aparicio A.M."/>
            <person name="Davis K."/>
            <person name="Duncan M."/>
            <person name="Federspiel N."/>
            <person name="Hyman R."/>
            <person name="Kalman S."/>
            <person name="Komp C."/>
            <person name="Kurdi O."/>
            <person name="Lew H."/>
            <person name="Lin D."/>
            <person name="Namath A."/>
            <person name="Oefner P."/>
            <person name="Roberts D."/>
            <person name="Schramm S."/>
            <person name="Davis R.W."/>
        </authorList>
    </citation>
    <scope>NUCLEOTIDE SEQUENCE [LARGE SCALE GENOMIC DNA]</scope>
    <source>
        <strain>K12 / MG1655 / ATCC 47076</strain>
    </source>
</reference>
<reference key="5">
    <citation type="journal article" date="1997" name="Science">
        <title>The complete genome sequence of Escherichia coli K-12.</title>
        <authorList>
            <person name="Blattner F.R."/>
            <person name="Plunkett G. III"/>
            <person name="Bloch C.A."/>
            <person name="Perna N.T."/>
            <person name="Burland V."/>
            <person name="Riley M."/>
            <person name="Collado-Vides J."/>
            <person name="Glasner J.D."/>
            <person name="Rode C.K."/>
            <person name="Mayhew G.F."/>
            <person name="Gregor J."/>
            <person name="Davis N.W."/>
            <person name="Kirkpatrick H.A."/>
            <person name="Goeden M.A."/>
            <person name="Rose D.J."/>
            <person name="Mau B."/>
            <person name="Shao Y."/>
        </authorList>
    </citation>
    <scope>NUCLEOTIDE SEQUENCE [LARGE SCALE GENOMIC DNA]</scope>
    <source>
        <strain>K12 / MG1655 / ATCC 47076</strain>
    </source>
</reference>
<reference key="6">
    <citation type="journal article" date="2006" name="Mol. Syst. Biol.">
        <title>Highly accurate genome sequences of Escherichia coli K-12 strains MG1655 and W3110.</title>
        <authorList>
            <person name="Hayashi K."/>
            <person name="Morooka N."/>
            <person name="Yamamoto Y."/>
            <person name="Fujita K."/>
            <person name="Isono K."/>
            <person name="Choi S."/>
            <person name="Ohtsubo E."/>
            <person name="Baba T."/>
            <person name="Wanner B.L."/>
            <person name="Mori H."/>
            <person name="Horiuchi T."/>
        </authorList>
    </citation>
    <scope>NUCLEOTIDE SEQUENCE [LARGE SCALE GENOMIC DNA]</scope>
    <source>
        <strain>K12 / W3110 / ATCC 27325 / DSM 5911</strain>
    </source>
</reference>
<reference key="7">
    <citation type="journal article" date="2002" name="J. Bacteriol.">
        <title>Biosynthesis pathway of ADP-L-glycero-beta-D-manno-heptose in Escherichia coli.</title>
        <authorList>
            <person name="Kneidinger B."/>
            <person name="Marolda C."/>
            <person name="Graninger M."/>
            <person name="Zamyatina A."/>
            <person name="McArthur F."/>
            <person name="Kosma P."/>
            <person name="Valvano M.A."/>
            <person name="Messner P."/>
        </authorList>
    </citation>
    <scope>FUNCTION</scope>
    <scope>ADP-L-GLYCERO-BETA-D-MANNO-HEPTOSE BIOSYNTHESIS PATHWAY</scope>
    <source>
        <strain>K12 / DH5-alpha</strain>
        <strain>K12 / MG1655 / ATCC 47076</strain>
    </source>
</reference>
<reference key="8">
    <citation type="journal article" date="2002" name="Microbiology">
        <title>Novel pathways for biosynthesis of nucleotide-activated glycero-manno-heptose precursors of bacterial glycoproteins and cell surface polysaccharides.</title>
        <authorList>
            <person name="Valvano M.A."/>
            <person name="Messner P."/>
            <person name="Kosma P."/>
        </authorList>
    </citation>
    <scope>BIOSYNTHESIS OF NUCLEOTIDE-ACTIVATED GLYCERO-MANNO-HEPTOSE</scope>
</reference>
<reference key="9">
    <citation type="journal article" date="2002" name="Annu. Rev. Biochem.">
        <title>Lipopolysaccharide endotoxins.</title>
        <authorList>
            <person name="Raetz C.R.H."/>
            <person name="Whitfield C."/>
        </authorList>
    </citation>
    <scope>LIPOPOLYSACCHARIDE REVIEW</scope>
</reference>
<reference key="10">
    <citation type="journal article" date="2008" name="J. Biol. Chem.">
        <title>Structure and function of sedoheptulose-7-phosphate isomerase, a critical enzyme for lipopolysaccharide biosynthesis and a target for antibiotic adjuvants.</title>
        <authorList>
            <person name="Taylor P.L."/>
            <person name="Blakely K.M."/>
            <person name="de Leon G.P."/>
            <person name="Walker J.R."/>
            <person name="McArthur F."/>
            <person name="Evdokimova E."/>
            <person name="Zhang K."/>
            <person name="Valvano M.A."/>
            <person name="Wright G.D."/>
            <person name="Junop M.S."/>
        </authorList>
    </citation>
    <scope>X-RAY CRYSTALLOGRAPHY (1.95 ANGSTROMS) OF APOENZYME AND IN COMPLEX WITH SEDOHEPTULOSE-7-PHOSPHATE</scope>
    <scope>FUNCTION</scope>
    <scope>CATALYTIC ACTIVITY</scope>
    <scope>SUBUNIT</scope>
    <scope>MUTAGENESIS OF HIS-61; GLU-65; ARG-69; ASP-94; THR-120; ASP-169; GLN-172 AND HIS-180</scope>
</reference>
<feature type="chain" id="PRO_0000136526" description="Phosphoheptose isomerase">
    <location>
        <begin position="1"/>
        <end position="192"/>
    </location>
</feature>
<feature type="domain" description="SIS">
    <location>
        <begin position="37"/>
        <end position="192"/>
    </location>
</feature>
<feature type="binding site">
    <location>
        <begin position="54"/>
        <end position="55"/>
    </location>
    <ligand>
        <name>substrate</name>
    </ligand>
</feature>
<feature type="binding site">
    <location>
        <position position="61"/>
    </location>
    <ligand>
        <name>substrate</name>
    </ligand>
</feature>
<feature type="binding site" evidence="1">
    <location>
        <position position="61"/>
    </location>
    <ligand>
        <name>Zn(2+)</name>
        <dbReference type="ChEBI" id="CHEBI:29105"/>
    </ligand>
</feature>
<feature type="binding site" evidence="1">
    <location>
        <position position="65"/>
    </location>
    <ligand>
        <name>substrate</name>
    </ligand>
</feature>
<feature type="binding site" evidence="1">
    <location>
        <position position="65"/>
    </location>
    <ligand>
        <name>Zn(2+)</name>
        <dbReference type="ChEBI" id="CHEBI:29105"/>
    </ligand>
</feature>
<feature type="binding site" evidence="1">
    <location>
        <begin position="93"/>
        <end position="94"/>
    </location>
    <ligand>
        <name>substrate</name>
    </ligand>
</feature>
<feature type="binding site" evidence="1">
    <location>
        <begin position="119"/>
        <end position="121"/>
    </location>
    <ligand>
        <name>substrate</name>
    </ligand>
</feature>
<feature type="binding site">
    <location>
        <position position="120"/>
    </location>
    <ligand>
        <name>substrate</name>
    </ligand>
</feature>
<feature type="binding site" evidence="1">
    <location>
        <position position="124"/>
    </location>
    <ligand>
        <name>substrate</name>
    </ligand>
</feature>
<feature type="binding site">
    <location>
        <position position="169"/>
    </location>
    <ligand>
        <name>substrate</name>
    </ligand>
</feature>
<feature type="binding site">
    <location>
        <position position="172"/>
    </location>
    <ligand>
        <name>substrate</name>
    </ligand>
</feature>
<feature type="binding site" evidence="1">
    <location>
        <position position="172"/>
    </location>
    <ligand>
        <name>Zn(2+)</name>
        <dbReference type="ChEBI" id="CHEBI:29105"/>
    </ligand>
</feature>
<feature type="binding site">
    <location>
        <position position="180"/>
    </location>
    <ligand>
        <name>substrate</name>
    </ligand>
</feature>
<feature type="binding site" evidence="1">
    <location>
        <position position="180"/>
    </location>
    <ligand>
        <name>Zn(2+)</name>
        <dbReference type="ChEBI" id="CHEBI:29105"/>
    </ligand>
</feature>
<feature type="mutagenesis site" description="Almost no effect." evidence="3">
    <original>H</original>
    <variation>Q</variation>
    <location>
        <position position="61"/>
    </location>
</feature>
<feature type="mutagenesis site" description="No activity." evidence="3">
    <original>E</original>
    <variation>N</variation>
    <variation>Q</variation>
    <location>
        <position position="65"/>
    </location>
</feature>
<feature type="mutagenesis site" description="Almost no effect." evidence="3">
    <original>R</original>
    <variation>Q</variation>
    <location>
        <position position="69"/>
    </location>
</feature>
<feature type="mutagenesis site" description="No activity." evidence="3">
    <original>D</original>
    <variation>N</variation>
    <location>
        <position position="94"/>
    </location>
</feature>
<feature type="mutagenesis site" description="No activity." evidence="3">
    <original>T</original>
    <variation>A</variation>
    <location>
        <position position="120"/>
    </location>
</feature>
<feature type="mutagenesis site" description="No activity." evidence="3">
    <original>D</original>
    <variation>N</variation>
    <location>
        <position position="169"/>
    </location>
</feature>
<feature type="mutagenesis site" description="No activity." evidence="3">
    <original>Q</original>
    <variation>E</variation>
    <location>
        <position position="172"/>
    </location>
</feature>
<feature type="mutagenesis site" description="No activity." evidence="3">
    <original>H</original>
    <variation>Q</variation>
    <location>
        <position position="180"/>
    </location>
</feature>
<feature type="helix" evidence="5">
    <location>
        <begin position="3"/>
        <end position="22"/>
    </location>
</feature>
<feature type="helix" evidence="5">
    <location>
        <begin position="24"/>
        <end position="42"/>
    </location>
</feature>
<feature type="strand" evidence="5">
    <location>
        <begin position="47"/>
        <end position="52"/>
    </location>
</feature>
<feature type="helix" evidence="5">
    <location>
        <begin position="54"/>
        <end position="70"/>
    </location>
</feature>
<feature type="strand" evidence="5">
    <location>
        <begin position="74"/>
        <end position="76"/>
    </location>
</feature>
<feature type="strand" evidence="5">
    <location>
        <begin position="78"/>
        <end position="81"/>
    </location>
</feature>
<feature type="helix" evidence="5">
    <location>
        <begin position="88"/>
        <end position="91"/>
    </location>
</feature>
<feature type="helix" evidence="5">
    <location>
        <begin position="100"/>
        <end position="108"/>
    </location>
</feature>
<feature type="strand" evidence="5">
    <location>
        <begin position="114"/>
        <end position="118"/>
    </location>
</feature>
<feature type="strand" evidence="5">
    <location>
        <begin position="120"/>
        <end position="122"/>
    </location>
</feature>
<feature type="helix" evidence="5">
    <location>
        <begin position="125"/>
        <end position="137"/>
    </location>
</feature>
<feature type="strand" evidence="5">
    <location>
        <begin position="140"/>
        <end position="146"/>
    </location>
</feature>
<feature type="helix" evidence="5">
    <location>
        <begin position="150"/>
        <end position="152"/>
    </location>
</feature>
<feature type="strand" evidence="5">
    <location>
        <begin position="156"/>
        <end position="162"/>
    </location>
</feature>
<feature type="helix" evidence="5">
    <location>
        <begin position="168"/>
        <end position="191"/>
    </location>
</feature>
<name>GMHA_ECOLI</name>
<organism>
    <name type="scientific">Escherichia coli (strain K12)</name>
    <dbReference type="NCBI Taxonomy" id="83333"/>
    <lineage>
        <taxon>Bacteria</taxon>
        <taxon>Pseudomonadati</taxon>
        <taxon>Pseudomonadota</taxon>
        <taxon>Gammaproteobacteria</taxon>
        <taxon>Enterobacterales</taxon>
        <taxon>Enterobacteriaceae</taxon>
        <taxon>Escherichia</taxon>
    </lineage>
</organism>